<name>RNH2_ZYMMO</name>
<gene>
    <name evidence="1" type="primary">rnhB</name>
    <name type="ordered locus">ZMO1004</name>
</gene>
<evidence type="ECO:0000255" key="1">
    <source>
        <dbReference type="HAMAP-Rule" id="MF_00052"/>
    </source>
</evidence>
<evidence type="ECO:0000255" key="2">
    <source>
        <dbReference type="PROSITE-ProRule" id="PRU01319"/>
    </source>
</evidence>
<organism>
    <name type="scientific">Zymomonas mobilis subsp. mobilis (strain ATCC 31821 / ZM4 / CP4)</name>
    <dbReference type="NCBI Taxonomy" id="264203"/>
    <lineage>
        <taxon>Bacteria</taxon>
        <taxon>Pseudomonadati</taxon>
        <taxon>Pseudomonadota</taxon>
        <taxon>Alphaproteobacteria</taxon>
        <taxon>Sphingomonadales</taxon>
        <taxon>Zymomonadaceae</taxon>
        <taxon>Zymomonas</taxon>
    </lineage>
</organism>
<reference key="1">
    <citation type="journal article" date="2005" name="Nat. Biotechnol.">
        <title>The genome sequence of the ethanologenic bacterium Zymomonas mobilis ZM4.</title>
        <authorList>
            <person name="Seo J.-S."/>
            <person name="Chong H."/>
            <person name="Park H.S."/>
            <person name="Yoon K.-O."/>
            <person name="Jung C."/>
            <person name="Kim J.J."/>
            <person name="Hong J.H."/>
            <person name="Kim H."/>
            <person name="Kim J.-H."/>
            <person name="Kil J.-I."/>
            <person name="Park C.J."/>
            <person name="Oh H.-M."/>
            <person name="Lee J.-S."/>
            <person name="Jin S.-J."/>
            <person name="Um H.-W."/>
            <person name="Lee H.-J."/>
            <person name="Oh S.-J."/>
            <person name="Kim J.Y."/>
            <person name="Kang H.L."/>
            <person name="Lee S.Y."/>
            <person name="Lee K.J."/>
            <person name="Kang H.S."/>
        </authorList>
    </citation>
    <scope>NUCLEOTIDE SEQUENCE [LARGE SCALE GENOMIC DNA]</scope>
    <source>
        <strain>ATCC 31821 / ZM4 / CP4</strain>
    </source>
</reference>
<keyword id="KW-0963">Cytoplasm</keyword>
<keyword id="KW-0255">Endonuclease</keyword>
<keyword id="KW-0378">Hydrolase</keyword>
<keyword id="KW-0464">Manganese</keyword>
<keyword id="KW-0479">Metal-binding</keyword>
<keyword id="KW-0540">Nuclease</keyword>
<keyword id="KW-1185">Reference proteome</keyword>
<accession>Q5NNT2</accession>
<protein>
    <recommendedName>
        <fullName evidence="1">Ribonuclease HII</fullName>
        <shortName evidence="1">RNase HII</shortName>
        <ecNumber evidence="1">3.1.26.4</ecNumber>
    </recommendedName>
</protein>
<comment type="function">
    <text evidence="1">Endonuclease that specifically degrades the RNA of RNA-DNA hybrids.</text>
</comment>
<comment type="catalytic activity">
    <reaction evidence="1">
        <text>Endonucleolytic cleavage to 5'-phosphomonoester.</text>
        <dbReference type="EC" id="3.1.26.4"/>
    </reaction>
</comment>
<comment type="cofactor">
    <cofactor evidence="1">
        <name>Mn(2+)</name>
        <dbReference type="ChEBI" id="CHEBI:29035"/>
    </cofactor>
    <cofactor evidence="1">
        <name>Mg(2+)</name>
        <dbReference type="ChEBI" id="CHEBI:18420"/>
    </cofactor>
    <text evidence="1">Manganese or magnesium. Binds 1 divalent metal ion per monomer in the absence of substrate. May bind a second metal ion after substrate binding.</text>
</comment>
<comment type="subcellular location">
    <subcellularLocation>
        <location evidence="1">Cytoplasm</location>
    </subcellularLocation>
</comment>
<comment type="similarity">
    <text evidence="1">Belongs to the RNase HII family.</text>
</comment>
<sequence length="215" mass="24193">MVAGSPKTSKKTLPDLSYEDRIEGVVFGVDEVGRGPLAGPVMAGAVYLHREHIPEGINDSKKLTARRRHLLSDMLHNQADYATGMADVHEIDRINIRQASLLAMKRAVEALIQKIGREPDCILVDGRDIPDWPWPSLPIIKGDSLSLSIAAASIVAKVERDEIMVKASQEYPGYGWEHNMGYPTKEHREAIQRLKPTKFHRRSFSPIRQFYENVD</sequence>
<proteinExistence type="inferred from homology"/>
<feature type="chain" id="PRO_0000235792" description="Ribonuclease HII">
    <location>
        <begin position="1"/>
        <end position="215"/>
    </location>
</feature>
<feature type="domain" description="RNase H type-2" evidence="2">
    <location>
        <begin position="24"/>
        <end position="215"/>
    </location>
</feature>
<feature type="binding site" evidence="1">
    <location>
        <position position="30"/>
    </location>
    <ligand>
        <name>a divalent metal cation</name>
        <dbReference type="ChEBI" id="CHEBI:60240"/>
    </ligand>
</feature>
<feature type="binding site" evidence="1">
    <location>
        <position position="31"/>
    </location>
    <ligand>
        <name>a divalent metal cation</name>
        <dbReference type="ChEBI" id="CHEBI:60240"/>
    </ligand>
</feature>
<feature type="binding site" evidence="1">
    <location>
        <position position="125"/>
    </location>
    <ligand>
        <name>a divalent metal cation</name>
        <dbReference type="ChEBI" id="CHEBI:60240"/>
    </ligand>
</feature>
<dbReference type="EC" id="3.1.26.4" evidence="1"/>
<dbReference type="EMBL" id="AE008692">
    <property type="protein sequence ID" value="AAV89628.1"/>
    <property type="molecule type" value="Genomic_DNA"/>
</dbReference>
<dbReference type="RefSeq" id="WP_011240853.1">
    <property type="nucleotide sequence ID" value="NZ_CP035711.1"/>
</dbReference>
<dbReference type="SMR" id="Q5NNT2"/>
<dbReference type="STRING" id="264203.ZMO1004"/>
<dbReference type="KEGG" id="zmo:ZMO1004"/>
<dbReference type="eggNOG" id="COG0164">
    <property type="taxonomic scope" value="Bacteria"/>
</dbReference>
<dbReference type="HOGENOM" id="CLU_036532_3_2_5"/>
<dbReference type="Proteomes" id="UP000001173">
    <property type="component" value="Chromosome"/>
</dbReference>
<dbReference type="GO" id="GO:0005737">
    <property type="term" value="C:cytoplasm"/>
    <property type="evidence" value="ECO:0007669"/>
    <property type="project" value="UniProtKB-SubCell"/>
</dbReference>
<dbReference type="GO" id="GO:0032299">
    <property type="term" value="C:ribonuclease H2 complex"/>
    <property type="evidence" value="ECO:0007669"/>
    <property type="project" value="TreeGrafter"/>
</dbReference>
<dbReference type="GO" id="GO:0030145">
    <property type="term" value="F:manganese ion binding"/>
    <property type="evidence" value="ECO:0007669"/>
    <property type="project" value="UniProtKB-UniRule"/>
</dbReference>
<dbReference type="GO" id="GO:0003723">
    <property type="term" value="F:RNA binding"/>
    <property type="evidence" value="ECO:0007669"/>
    <property type="project" value="InterPro"/>
</dbReference>
<dbReference type="GO" id="GO:0004523">
    <property type="term" value="F:RNA-DNA hybrid ribonuclease activity"/>
    <property type="evidence" value="ECO:0007669"/>
    <property type="project" value="UniProtKB-UniRule"/>
</dbReference>
<dbReference type="GO" id="GO:0043137">
    <property type="term" value="P:DNA replication, removal of RNA primer"/>
    <property type="evidence" value="ECO:0007669"/>
    <property type="project" value="TreeGrafter"/>
</dbReference>
<dbReference type="GO" id="GO:0006298">
    <property type="term" value="P:mismatch repair"/>
    <property type="evidence" value="ECO:0007669"/>
    <property type="project" value="TreeGrafter"/>
</dbReference>
<dbReference type="CDD" id="cd07182">
    <property type="entry name" value="RNase_HII_bacteria_HII_like"/>
    <property type="match status" value="1"/>
</dbReference>
<dbReference type="Gene3D" id="3.30.420.10">
    <property type="entry name" value="Ribonuclease H-like superfamily/Ribonuclease H"/>
    <property type="match status" value="1"/>
</dbReference>
<dbReference type="HAMAP" id="MF_00052_B">
    <property type="entry name" value="RNase_HII_B"/>
    <property type="match status" value="1"/>
</dbReference>
<dbReference type="InterPro" id="IPR022898">
    <property type="entry name" value="RNase_HII"/>
</dbReference>
<dbReference type="InterPro" id="IPR001352">
    <property type="entry name" value="RNase_HII/HIII"/>
</dbReference>
<dbReference type="InterPro" id="IPR024567">
    <property type="entry name" value="RNase_HII/HIII_dom"/>
</dbReference>
<dbReference type="InterPro" id="IPR012337">
    <property type="entry name" value="RNaseH-like_sf"/>
</dbReference>
<dbReference type="InterPro" id="IPR036397">
    <property type="entry name" value="RNaseH_sf"/>
</dbReference>
<dbReference type="NCBIfam" id="NF000595">
    <property type="entry name" value="PRK00015.1-3"/>
    <property type="match status" value="1"/>
</dbReference>
<dbReference type="PANTHER" id="PTHR10954">
    <property type="entry name" value="RIBONUCLEASE H2 SUBUNIT A"/>
    <property type="match status" value="1"/>
</dbReference>
<dbReference type="PANTHER" id="PTHR10954:SF18">
    <property type="entry name" value="RIBONUCLEASE HII"/>
    <property type="match status" value="1"/>
</dbReference>
<dbReference type="Pfam" id="PF01351">
    <property type="entry name" value="RNase_HII"/>
    <property type="match status" value="1"/>
</dbReference>
<dbReference type="SUPFAM" id="SSF53098">
    <property type="entry name" value="Ribonuclease H-like"/>
    <property type="match status" value="1"/>
</dbReference>
<dbReference type="PROSITE" id="PS51975">
    <property type="entry name" value="RNASE_H_2"/>
    <property type="match status" value="1"/>
</dbReference>